<protein>
    <recommendedName>
        <fullName>Ammonium transporter Rh type B</fullName>
    </recommendedName>
    <alternativeName>
        <fullName>Rhesus blood group family type B glycoprotein</fullName>
        <shortName>Rh family type B glycoprotein</shortName>
        <shortName>Rh type B glycoprotein</shortName>
    </alternativeName>
</protein>
<name>RHBG_PIG</name>
<sequence>MAGSSRRAGGRRLQLPLLCLLLQGATAILFAVFVRYNHETDAALWHWGNHSNPDNEFYFRYPSFQDVHTMIFVGFGFLMAFLQRYGFSSVGFTFLLAAFALQWSTLVQGFLHTFHGGHIHIGVESMINADFCAGAVLISFGAILGKTGPAQLLLMALLEVVLFGLNEFVLLSLLGVKDAGGSMTIHTFGAYFGLVLSRVLYRPQLEKSKHRQSSVYHSDLFAMIGTIFLWIFWPSFNSAPTPLGDGQHRTALNTYYSLTASTLSTFALSALVGRDGRLDMVHVQNAALAGGVVVGTSAEMMLTPFGALAAGFLAGTVSTLGFKFFTPILESKFKIQDTCGVHNLHGMPGVLGALLGVLVAGLATHDSYGEGLESVFPLIAEGQRSSTSQALHQLFGLFVTLIFASVGGGLGGLLLRLPFLDSPPDSQCYEDQIYWEVPEEHADLAQGSLRPEEPDTQA</sequence>
<organism>
    <name type="scientific">Sus scrofa</name>
    <name type="common">Pig</name>
    <dbReference type="NCBI Taxonomy" id="9823"/>
    <lineage>
        <taxon>Eukaryota</taxon>
        <taxon>Metazoa</taxon>
        <taxon>Chordata</taxon>
        <taxon>Craniata</taxon>
        <taxon>Vertebrata</taxon>
        <taxon>Euteleostomi</taxon>
        <taxon>Mammalia</taxon>
        <taxon>Eutheria</taxon>
        <taxon>Laurasiatheria</taxon>
        <taxon>Artiodactyla</taxon>
        <taxon>Suina</taxon>
        <taxon>Suidae</taxon>
        <taxon>Sus</taxon>
    </lineage>
</organism>
<reference key="1">
    <citation type="journal article" date="2001" name="Blood Cells Mol. Dis.">
        <title>New insights into the Rh superfamily of genes and proteins in erythroid cells and nonerythroid tissues.</title>
        <authorList>
            <person name="Huang C.-H."/>
            <person name="Liu P.Z."/>
        </authorList>
    </citation>
    <scope>NUCLEOTIDE SEQUENCE [MRNA]</scope>
</reference>
<accession>Q95M75</accession>
<proteinExistence type="evidence at transcript level"/>
<feature type="chain" id="PRO_0000283602" description="Ammonium transporter Rh type B">
    <location>
        <begin position="1"/>
        <end position="458"/>
    </location>
</feature>
<feature type="topological domain" description="Cytoplasmic" evidence="3">
    <location>
        <begin position="1"/>
        <end position="13"/>
    </location>
</feature>
<feature type="transmembrane region" description="Helical" evidence="3">
    <location>
        <begin position="14"/>
        <end position="34"/>
    </location>
</feature>
<feature type="topological domain" description="Extracellular" evidence="3">
    <location>
        <begin position="35"/>
        <end position="61"/>
    </location>
</feature>
<feature type="transmembrane region" description="Helical" evidence="3">
    <location>
        <begin position="62"/>
        <end position="82"/>
    </location>
</feature>
<feature type="topological domain" description="Cytoplasmic" evidence="3">
    <location>
        <begin position="83"/>
        <end position="86"/>
    </location>
</feature>
<feature type="transmembrane region" description="Helical" evidence="3">
    <location>
        <begin position="87"/>
        <end position="107"/>
    </location>
</feature>
<feature type="topological domain" description="Extracellular" evidence="3">
    <location>
        <begin position="108"/>
        <end position="124"/>
    </location>
</feature>
<feature type="transmembrane region" description="Helical" evidence="3">
    <location>
        <begin position="125"/>
        <end position="145"/>
    </location>
</feature>
<feature type="topological domain" description="Cytoplasmic" evidence="3">
    <location>
        <begin position="146"/>
        <end position="149"/>
    </location>
</feature>
<feature type="transmembrane region" description="Helical" evidence="3">
    <location>
        <begin position="150"/>
        <end position="170"/>
    </location>
</feature>
<feature type="topological domain" description="Extracellular" evidence="3">
    <location>
        <begin position="171"/>
        <end position="178"/>
    </location>
</feature>
<feature type="transmembrane region" description="Helical" evidence="3">
    <location>
        <begin position="179"/>
        <end position="201"/>
    </location>
</feature>
<feature type="topological domain" description="Cytoplasmic" evidence="3">
    <location>
        <begin position="202"/>
        <end position="219"/>
    </location>
</feature>
<feature type="transmembrane region" description="Helical" evidence="3">
    <location>
        <begin position="220"/>
        <end position="240"/>
    </location>
</feature>
<feature type="topological domain" description="Extracellular" evidence="3">
    <location>
        <begin position="241"/>
        <end position="251"/>
    </location>
</feature>
<feature type="transmembrane region" description="Helical" evidence="3">
    <location>
        <begin position="252"/>
        <end position="272"/>
    </location>
</feature>
<feature type="topological domain" description="Cytoplasmic" evidence="3">
    <location>
        <begin position="273"/>
        <end position="282"/>
    </location>
</feature>
<feature type="transmembrane region" description="Helical" evidence="3">
    <location>
        <begin position="283"/>
        <end position="303"/>
    </location>
</feature>
<feature type="topological domain" description="Extracellular" evidence="3">
    <location>
        <position position="304"/>
    </location>
</feature>
<feature type="transmembrane region" description="Helical" evidence="3">
    <location>
        <begin position="305"/>
        <end position="325"/>
    </location>
</feature>
<feature type="topological domain" description="Cytoplasmic" evidence="3">
    <location>
        <begin position="326"/>
        <end position="346"/>
    </location>
</feature>
<feature type="transmembrane region" description="Helical" evidence="3">
    <location>
        <begin position="347"/>
        <end position="367"/>
    </location>
</feature>
<feature type="topological domain" description="Extracellular" evidence="3">
    <location>
        <begin position="368"/>
        <end position="393"/>
    </location>
</feature>
<feature type="transmembrane region" description="Helical" evidence="3">
    <location>
        <begin position="394"/>
        <end position="414"/>
    </location>
</feature>
<feature type="topological domain" description="Cytoplasmic" evidence="3">
    <location>
        <begin position="415"/>
        <end position="458"/>
    </location>
</feature>
<feature type="region of interest" description="Interaction with ANK3" evidence="1">
    <location>
        <begin position="416"/>
        <end position="424"/>
    </location>
</feature>
<feature type="short sequence motif" description="Basolateral sorting signal" evidence="1">
    <location>
        <begin position="429"/>
        <end position="432"/>
    </location>
</feature>
<feature type="glycosylation site" description="N-linked (GlcNAc...) asparagine" evidence="3">
    <location>
        <position position="49"/>
    </location>
</feature>
<keyword id="KW-0924">Ammonia transport</keyword>
<keyword id="KW-1003">Cell membrane</keyword>
<keyword id="KW-0325">Glycoprotein</keyword>
<keyword id="KW-0472">Membrane</keyword>
<keyword id="KW-1185">Reference proteome</keyword>
<keyword id="KW-0812">Transmembrane</keyword>
<keyword id="KW-1133">Transmembrane helix</keyword>
<keyword id="KW-0813">Transport</keyword>
<dbReference type="EMBL" id="AY013261">
    <property type="protein sequence ID" value="AAK14651.1"/>
    <property type="molecule type" value="mRNA"/>
</dbReference>
<dbReference type="RefSeq" id="NP_999161.1">
    <property type="nucleotide sequence ID" value="NM_213996.1"/>
</dbReference>
<dbReference type="SMR" id="Q95M75"/>
<dbReference type="FunCoup" id="Q95M75">
    <property type="interactions" value="16"/>
</dbReference>
<dbReference type="STRING" id="9823.ENSSSCP00000057315"/>
<dbReference type="GlyCosmos" id="Q95M75">
    <property type="glycosylation" value="1 site, No reported glycans"/>
</dbReference>
<dbReference type="GlyGen" id="Q95M75">
    <property type="glycosylation" value="1 site"/>
</dbReference>
<dbReference type="Ensembl" id="ENSSSCT00000037369.3">
    <property type="protein sequence ID" value="ENSSSCP00000057315.3"/>
    <property type="gene ID" value="ENSSSCG00000035121.3"/>
</dbReference>
<dbReference type="Ensembl" id="ENSSSCT00070055190.1">
    <property type="protein sequence ID" value="ENSSSCP00070046835.1"/>
    <property type="gene ID" value="ENSSSCG00070027530.1"/>
</dbReference>
<dbReference type="Ensembl" id="ENSSSCT00085050150">
    <property type="protein sequence ID" value="ENSSSCP00085035118"/>
    <property type="gene ID" value="ENSSSCG00085026084"/>
</dbReference>
<dbReference type="Ensembl" id="ENSSSCT00105016082">
    <property type="protein sequence ID" value="ENSSSCP00105011403"/>
    <property type="gene ID" value="ENSSSCG00105008091"/>
</dbReference>
<dbReference type="Ensembl" id="ENSSSCT00110075911">
    <property type="protein sequence ID" value="ENSSSCP00110053581"/>
    <property type="gene ID" value="ENSSSCG00110039774"/>
</dbReference>
<dbReference type="Ensembl" id="ENSSSCT00115022922">
    <property type="protein sequence ID" value="ENSSSCP00115021731"/>
    <property type="gene ID" value="ENSSSCG00115013248"/>
</dbReference>
<dbReference type="Ensembl" id="ENSSSCT00130074917">
    <property type="protein sequence ID" value="ENSSSCP00130053882"/>
    <property type="gene ID" value="ENSSSCG00130038412"/>
</dbReference>
<dbReference type="GeneID" id="397056"/>
<dbReference type="KEGG" id="ssc:397056"/>
<dbReference type="CTD" id="57127"/>
<dbReference type="VGNC" id="VGNC:98845">
    <property type="gene designation" value="RHBG"/>
</dbReference>
<dbReference type="GeneTree" id="ENSGT00950000182844"/>
<dbReference type="InParanoid" id="Q95M75"/>
<dbReference type="OMA" id="DNIYWEV"/>
<dbReference type="OrthoDB" id="534912at2759"/>
<dbReference type="Reactome" id="R-SSC-444411">
    <property type="pathway name" value="Rhesus glycoproteins mediate ammonium transport"/>
</dbReference>
<dbReference type="Proteomes" id="UP000008227">
    <property type="component" value="Chromosome 4"/>
</dbReference>
<dbReference type="Proteomes" id="UP000314985">
    <property type="component" value="Chromosome 4"/>
</dbReference>
<dbReference type="Proteomes" id="UP000694570">
    <property type="component" value="Unplaced"/>
</dbReference>
<dbReference type="Proteomes" id="UP000694571">
    <property type="component" value="Unplaced"/>
</dbReference>
<dbReference type="Proteomes" id="UP000694720">
    <property type="component" value="Unplaced"/>
</dbReference>
<dbReference type="Proteomes" id="UP000694722">
    <property type="component" value="Unplaced"/>
</dbReference>
<dbReference type="Proteomes" id="UP000694723">
    <property type="component" value="Unplaced"/>
</dbReference>
<dbReference type="Proteomes" id="UP000694724">
    <property type="component" value="Unplaced"/>
</dbReference>
<dbReference type="Proteomes" id="UP000694725">
    <property type="component" value="Unplaced"/>
</dbReference>
<dbReference type="Proteomes" id="UP000694726">
    <property type="component" value="Unplaced"/>
</dbReference>
<dbReference type="Proteomes" id="UP000694727">
    <property type="component" value="Unplaced"/>
</dbReference>
<dbReference type="Proteomes" id="UP000694728">
    <property type="component" value="Unplaced"/>
</dbReference>
<dbReference type="GO" id="GO:0016323">
    <property type="term" value="C:basolateral plasma membrane"/>
    <property type="evidence" value="ECO:0000250"/>
    <property type="project" value="UniProtKB"/>
</dbReference>
<dbReference type="GO" id="GO:0014731">
    <property type="term" value="C:spectrin-associated cytoskeleton"/>
    <property type="evidence" value="ECO:0000250"/>
    <property type="project" value="UniProtKB"/>
</dbReference>
<dbReference type="GO" id="GO:0008519">
    <property type="term" value="F:ammonium channel activity"/>
    <property type="evidence" value="ECO:0000250"/>
    <property type="project" value="UniProtKB"/>
</dbReference>
<dbReference type="GO" id="GO:0030506">
    <property type="term" value="F:ankyrin binding"/>
    <property type="evidence" value="ECO:0007669"/>
    <property type="project" value="Ensembl"/>
</dbReference>
<dbReference type="GO" id="GO:0035379">
    <property type="term" value="F:carbon dioxide transmembrane transporter activity"/>
    <property type="evidence" value="ECO:0000250"/>
    <property type="project" value="UniProtKB"/>
</dbReference>
<dbReference type="GO" id="GO:0072488">
    <property type="term" value="P:ammonium transmembrane transport"/>
    <property type="evidence" value="ECO:0000250"/>
    <property type="project" value="UniProtKB"/>
</dbReference>
<dbReference type="GO" id="GO:0070634">
    <property type="term" value="P:transepithelial ammonium transport"/>
    <property type="evidence" value="ECO:0007669"/>
    <property type="project" value="Ensembl"/>
</dbReference>
<dbReference type="FunFam" id="1.10.3430.10:FF:000001">
    <property type="entry name" value="Ammonium transporter Rh type C"/>
    <property type="match status" value="1"/>
</dbReference>
<dbReference type="Gene3D" id="1.10.3430.10">
    <property type="entry name" value="Ammonium transporter AmtB like domains"/>
    <property type="match status" value="1"/>
</dbReference>
<dbReference type="InterPro" id="IPR029020">
    <property type="entry name" value="Ammonium/urea_transptr"/>
</dbReference>
<dbReference type="InterPro" id="IPR024041">
    <property type="entry name" value="NH4_transpt_AmtB-like_dom"/>
</dbReference>
<dbReference type="InterPro" id="IPR002229">
    <property type="entry name" value="RhesusRHD"/>
</dbReference>
<dbReference type="PANTHER" id="PTHR11730">
    <property type="entry name" value="AMMONIUM TRANSPORTER"/>
    <property type="match status" value="1"/>
</dbReference>
<dbReference type="PANTHER" id="PTHR11730:SF42">
    <property type="entry name" value="AMMONIUM TRANSPORTER RH TYPE B"/>
    <property type="match status" value="1"/>
</dbReference>
<dbReference type="Pfam" id="PF00909">
    <property type="entry name" value="Ammonium_transp"/>
    <property type="match status" value="1"/>
</dbReference>
<dbReference type="PRINTS" id="PR00342">
    <property type="entry name" value="RHESUSRHD"/>
</dbReference>
<dbReference type="SUPFAM" id="SSF111352">
    <property type="entry name" value="Ammonium transporter"/>
    <property type="match status" value="1"/>
</dbReference>
<comment type="function">
    <text evidence="2">Ammonium transporter involved in the maintenance of acid-base homeostasis. Transports ammonium and its related derivative methylammonium across the basolateral plasma membrane of epithelial cells likely contributing to renal transepithelial ammonia transport and ammonia metabolism. May transport either NH4(+) or NH3 ammonia species predominantly mediating an electrogenic NH4(+) transport (By similarity). May act as a CO2 channel providing for renal acid secretion (By similarity).</text>
</comment>
<comment type="catalytic activity">
    <reaction evidence="2">
        <text>NH4(+)(in) = NH4(+)(out)</text>
        <dbReference type="Rhea" id="RHEA:28747"/>
        <dbReference type="ChEBI" id="CHEBI:28938"/>
    </reaction>
    <physiologicalReaction direction="left-to-right" evidence="2">
        <dbReference type="Rhea" id="RHEA:28748"/>
    </physiologicalReaction>
    <physiologicalReaction direction="right-to-left" evidence="2">
        <dbReference type="Rhea" id="RHEA:28749"/>
    </physiologicalReaction>
</comment>
<comment type="catalytic activity">
    <reaction evidence="2">
        <text>methylamine(out) = methylamine(in)</text>
        <dbReference type="Rhea" id="RHEA:74391"/>
        <dbReference type="ChEBI" id="CHEBI:59338"/>
    </reaction>
    <physiologicalReaction direction="left-to-right" evidence="2">
        <dbReference type="Rhea" id="RHEA:74392"/>
    </physiologicalReaction>
</comment>
<comment type="catalytic activity">
    <reaction evidence="2">
        <text>CO2(out) = CO2(in)</text>
        <dbReference type="Rhea" id="RHEA:74891"/>
        <dbReference type="ChEBI" id="CHEBI:16526"/>
    </reaction>
    <physiologicalReaction direction="left-to-right" evidence="2">
        <dbReference type="Rhea" id="RHEA:74892"/>
    </physiologicalReaction>
</comment>
<comment type="subunit">
    <text evidence="2">Interacts (via C-terminus) with ANK2 and ANK3; required for targeting to the basolateral membrane.</text>
</comment>
<comment type="subcellular location">
    <subcellularLocation>
        <location evidence="2">Cell membrane</location>
        <topology evidence="2">Multi-pass membrane protein</topology>
    </subcellularLocation>
    <subcellularLocation>
        <location evidence="2">Basolateral cell membrane</location>
        <topology evidence="3">Multi-pass membrane protein</topology>
    </subcellularLocation>
</comment>
<comment type="PTM">
    <text evidence="1">N-glycosylated.</text>
</comment>
<comment type="similarity">
    <text evidence="4">Belongs to the ammonium transporter (TC 2.A.49) family. Rh subfamily.</text>
</comment>
<evidence type="ECO:0000250" key="1"/>
<evidence type="ECO:0000250" key="2">
    <source>
        <dbReference type="UniProtKB" id="Q9H310"/>
    </source>
</evidence>
<evidence type="ECO:0000255" key="3"/>
<evidence type="ECO:0000305" key="4"/>
<gene>
    <name type="primary">RHBG</name>
</gene>